<keyword id="KW-1185">Reference proteome</keyword>
<keyword id="KW-0687">Ribonucleoprotein</keyword>
<keyword id="KW-0689">Ribosomal protein</keyword>
<keyword id="KW-0694">RNA-binding</keyword>
<keyword id="KW-0699">rRNA-binding</keyword>
<gene>
    <name evidence="1" type="primary">rplU</name>
    <name type="ordered locus">Asuc_0917</name>
</gene>
<accession>A6VMT8</accession>
<protein>
    <recommendedName>
        <fullName evidence="1">Large ribosomal subunit protein bL21</fullName>
    </recommendedName>
    <alternativeName>
        <fullName evidence="2">50S ribosomal protein L21</fullName>
    </alternativeName>
</protein>
<reference key="1">
    <citation type="journal article" date="2010" name="BMC Genomics">
        <title>A genomic perspective on the potential of Actinobacillus succinogenes for industrial succinate production.</title>
        <authorList>
            <person name="McKinlay J.B."/>
            <person name="Laivenieks M."/>
            <person name="Schindler B.D."/>
            <person name="McKinlay A.A."/>
            <person name="Siddaramappa S."/>
            <person name="Challacombe J.F."/>
            <person name="Lowry S.R."/>
            <person name="Clum A."/>
            <person name="Lapidus A.L."/>
            <person name="Burkhart K.B."/>
            <person name="Harkins V."/>
            <person name="Vieille C."/>
        </authorList>
    </citation>
    <scope>NUCLEOTIDE SEQUENCE [LARGE SCALE GENOMIC DNA]</scope>
    <source>
        <strain>ATCC 55618 / DSM 22257 / CCUG 43843 / 130Z</strain>
    </source>
</reference>
<dbReference type="EMBL" id="CP000746">
    <property type="protein sequence ID" value="ABR74285.1"/>
    <property type="molecule type" value="Genomic_DNA"/>
</dbReference>
<dbReference type="RefSeq" id="WP_012072663.1">
    <property type="nucleotide sequence ID" value="NC_009655.1"/>
</dbReference>
<dbReference type="SMR" id="A6VMT8"/>
<dbReference type="STRING" id="339671.Asuc_0917"/>
<dbReference type="GeneID" id="93226344"/>
<dbReference type="KEGG" id="asu:Asuc_0917"/>
<dbReference type="eggNOG" id="COG0261">
    <property type="taxonomic scope" value="Bacteria"/>
</dbReference>
<dbReference type="HOGENOM" id="CLU_061463_3_2_6"/>
<dbReference type="OrthoDB" id="9813334at2"/>
<dbReference type="Proteomes" id="UP000001114">
    <property type="component" value="Chromosome"/>
</dbReference>
<dbReference type="GO" id="GO:0005737">
    <property type="term" value="C:cytoplasm"/>
    <property type="evidence" value="ECO:0007669"/>
    <property type="project" value="UniProtKB-ARBA"/>
</dbReference>
<dbReference type="GO" id="GO:1990904">
    <property type="term" value="C:ribonucleoprotein complex"/>
    <property type="evidence" value="ECO:0007669"/>
    <property type="project" value="UniProtKB-KW"/>
</dbReference>
<dbReference type="GO" id="GO:0005840">
    <property type="term" value="C:ribosome"/>
    <property type="evidence" value="ECO:0007669"/>
    <property type="project" value="UniProtKB-KW"/>
</dbReference>
<dbReference type="GO" id="GO:0019843">
    <property type="term" value="F:rRNA binding"/>
    <property type="evidence" value="ECO:0007669"/>
    <property type="project" value="UniProtKB-UniRule"/>
</dbReference>
<dbReference type="GO" id="GO:0003735">
    <property type="term" value="F:structural constituent of ribosome"/>
    <property type="evidence" value="ECO:0007669"/>
    <property type="project" value="InterPro"/>
</dbReference>
<dbReference type="GO" id="GO:0006412">
    <property type="term" value="P:translation"/>
    <property type="evidence" value="ECO:0007669"/>
    <property type="project" value="UniProtKB-UniRule"/>
</dbReference>
<dbReference type="HAMAP" id="MF_01363">
    <property type="entry name" value="Ribosomal_bL21"/>
    <property type="match status" value="1"/>
</dbReference>
<dbReference type="InterPro" id="IPR028909">
    <property type="entry name" value="bL21-like"/>
</dbReference>
<dbReference type="InterPro" id="IPR036164">
    <property type="entry name" value="bL21-like_sf"/>
</dbReference>
<dbReference type="InterPro" id="IPR001787">
    <property type="entry name" value="Ribosomal_bL21"/>
</dbReference>
<dbReference type="InterPro" id="IPR018258">
    <property type="entry name" value="Ribosomal_bL21_CS"/>
</dbReference>
<dbReference type="NCBIfam" id="TIGR00061">
    <property type="entry name" value="L21"/>
    <property type="match status" value="1"/>
</dbReference>
<dbReference type="PANTHER" id="PTHR21349">
    <property type="entry name" value="50S RIBOSOMAL PROTEIN L21"/>
    <property type="match status" value="1"/>
</dbReference>
<dbReference type="PANTHER" id="PTHR21349:SF0">
    <property type="entry name" value="LARGE RIBOSOMAL SUBUNIT PROTEIN BL21M"/>
    <property type="match status" value="1"/>
</dbReference>
<dbReference type="Pfam" id="PF00829">
    <property type="entry name" value="Ribosomal_L21p"/>
    <property type="match status" value="1"/>
</dbReference>
<dbReference type="SUPFAM" id="SSF141091">
    <property type="entry name" value="L21p-like"/>
    <property type="match status" value="1"/>
</dbReference>
<dbReference type="PROSITE" id="PS01169">
    <property type="entry name" value="RIBOSOMAL_L21"/>
    <property type="match status" value="1"/>
</dbReference>
<sequence>MYAVFQSGGKQHRVSEGQVVRLEKLELATGETVEFDSVLMVVNGEDVKIGAPVVSGAKVVAEVVAQGRGDKVKIVKFRRRKHSRKQQGHRQWFTEVKITGIQA</sequence>
<comment type="function">
    <text evidence="1">This protein binds to 23S rRNA in the presence of protein L20.</text>
</comment>
<comment type="subunit">
    <text evidence="1">Part of the 50S ribosomal subunit. Contacts protein L20.</text>
</comment>
<comment type="similarity">
    <text evidence="1">Belongs to the bacterial ribosomal protein bL21 family.</text>
</comment>
<evidence type="ECO:0000255" key="1">
    <source>
        <dbReference type="HAMAP-Rule" id="MF_01363"/>
    </source>
</evidence>
<evidence type="ECO:0000305" key="2"/>
<feature type="chain" id="PRO_1000073382" description="Large ribosomal subunit protein bL21">
    <location>
        <begin position="1"/>
        <end position="103"/>
    </location>
</feature>
<name>RL21_ACTSZ</name>
<proteinExistence type="inferred from homology"/>
<organism>
    <name type="scientific">Actinobacillus succinogenes (strain ATCC 55618 / DSM 22257 / CCUG 43843 / 130Z)</name>
    <dbReference type="NCBI Taxonomy" id="339671"/>
    <lineage>
        <taxon>Bacteria</taxon>
        <taxon>Pseudomonadati</taxon>
        <taxon>Pseudomonadota</taxon>
        <taxon>Gammaproteobacteria</taxon>
        <taxon>Pasteurellales</taxon>
        <taxon>Pasteurellaceae</taxon>
        <taxon>Actinobacillus</taxon>
    </lineage>
</organism>